<sequence>MGQKVHPHGIRLGIVKPWSSTWFANTQDFADNLEGDFKVRKFLNKELASASVSRITIERPAKSIRVTIHTARPGIVIGKKGEDVEKLRNAVSKIAGVPAQINIAEVKKPELDAKLVADSIASQLERRVMFRRAMKRAVQSAMRLGAKGIKVEVSGRLGGAEIARSEWYREGRVPLHTLRADIDYNTAEAHTTYGVIGVKVWIFKGEILGGMAAVAQSEQQPADKPKKAPRGKGRK</sequence>
<keyword id="KW-1185">Reference proteome</keyword>
<keyword id="KW-0687">Ribonucleoprotein</keyword>
<keyword id="KW-0689">Ribosomal protein</keyword>
<keyword id="KW-0694">RNA-binding</keyword>
<keyword id="KW-0699">rRNA-binding</keyword>
<reference key="1">
    <citation type="journal article" date="1995" name="Science">
        <title>Whole-genome random sequencing and assembly of Haemophilus influenzae Rd.</title>
        <authorList>
            <person name="Fleischmann R.D."/>
            <person name="Adams M.D."/>
            <person name="White O."/>
            <person name="Clayton R.A."/>
            <person name="Kirkness E.F."/>
            <person name="Kerlavage A.R."/>
            <person name="Bult C.J."/>
            <person name="Tomb J.-F."/>
            <person name="Dougherty B.A."/>
            <person name="Merrick J.M."/>
            <person name="McKenney K."/>
            <person name="Sutton G.G."/>
            <person name="FitzHugh W."/>
            <person name="Fields C.A."/>
            <person name="Gocayne J.D."/>
            <person name="Scott J.D."/>
            <person name="Shirley R."/>
            <person name="Liu L.-I."/>
            <person name="Glodek A."/>
            <person name="Kelley J.M."/>
            <person name="Weidman J.F."/>
            <person name="Phillips C.A."/>
            <person name="Spriggs T."/>
            <person name="Hedblom E."/>
            <person name="Cotton M.D."/>
            <person name="Utterback T.R."/>
            <person name="Hanna M.C."/>
            <person name="Nguyen D.T."/>
            <person name="Saudek D.M."/>
            <person name="Brandon R.C."/>
            <person name="Fine L.D."/>
            <person name="Fritchman J.L."/>
            <person name="Fuhrmann J.L."/>
            <person name="Geoghagen N.S.M."/>
            <person name="Gnehm C.L."/>
            <person name="McDonald L.A."/>
            <person name="Small K.V."/>
            <person name="Fraser C.M."/>
            <person name="Smith H.O."/>
            <person name="Venter J.C."/>
        </authorList>
    </citation>
    <scope>NUCLEOTIDE SEQUENCE [LARGE SCALE GENOMIC DNA]</scope>
    <source>
        <strain>ATCC 51907 / DSM 11121 / KW20 / Rd</strain>
    </source>
</reference>
<gene>
    <name evidence="2" type="primary">rpsC</name>
    <name evidence="2" type="synonym">rps3</name>
    <name type="ordered locus">HI_0783</name>
</gene>
<proteinExistence type="inferred from homology"/>
<feature type="initiator methionine" description="Removed" evidence="1">
    <location>
        <position position="1"/>
    </location>
</feature>
<feature type="chain" id="PRO_0000130128" description="Small ribosomal subunit protein uS3">
    <location>
        <begin position="2"/>
        <end position="235"/>
    </location>
</feature>
<feature type="domain" description="KH type-2" evidence="2">
    <location>
        <begin position="39"/>
        <end position="107"/>
    </location>
</feature>
<feature type="region of interest" description="Disordered" evidence="3">
    <location>
        <begin position="215"/>
        <end position="235"/>
    </location>
</feature>
<organism>
    <name type="scientific">Haemophilus influenzae (strain ATCC 51907 / DSM 11121 / KW20 / Rd)</name>
    <dbReference type="NCBI Taxonomy" id="71421"/>
    <lineage>
        <taxon>Bacteria</taxon>
        <taxon>Pseudomonadati</taxon>
        <taxon>Pseudomonadota</taxon>
        <taxon>Gammaproteobacteria</taxon>
        <taxon>Pasteurellales</taxon>
        <taxon>Pasteurellaceae</taxon>
        <taxon>Haemophilus</taxon>
    </lineage>
</organism>
<name>RS3_HAEIN</name>
<accession>P44372</accession>
<comment type="function">
    <text evidence="2">Binds the lower part of the 30S subunit head. Binds mRNA in the 70S ribosome, positioning it for translation.</text>
</comment>
<comment type="subunit">
    <text evidence="2">Part of the 30S ribosomal subunit. Forms a tight complex with proteins S10 and S14.</text>
</comment>
<comment type="similarity">
    <text evidence="2">Belongs to the universal ribosomal protein uS3 family.</text>
</comment>
<protein>
    <recommendedName>
        <fullName evidence="2">Small ribosomal subunit protein uS3</fullName>
    </recommendedName>
    <alternativeName>
        <fullName evidence="4">30S ribosomal protein S3</fullName>
    </alternativeName>
</protein>
<evidence type="ECO:0000250" key="1"/>
<evidence type="ECO:0000255" key="2">
    <source>
        <dbReference type="HAMAP-Rule" id="MF_01309"/>
    </source>
</evidence>
<evidence type="ECO:0000256" key="3">
    <source>
        <dbReference type="SAM" id="MobiDB-lite"/>
    </source>
</evidence>
<evidence type="ECO:0000305" key="4"/>
<dbReference type="EMBL" id="L42023">
    <property type="protein sequence ID" value="AAC22442.1"/>
    <property type="molecule type" value="Genomic_DNA"/>
</dbReference>
<dbReference type="PIR" id="B64093">
    <property type="entry name" value="B64093"/>
</dbReference>
<dbReference type="RefSeq" id="NP_438942.1">
    <property type="nucleotide sequence ID" value="NC_000907.1"/>
</dbReference>
<dbReference type="SMR" id="P44372"/>
<dbReference type="STRING" id="71421.HI_0783"/>
<dbReference type="EnsemblBacteria" id="AAC22442">
    <property type="protein sequence ID" value="AAC22442"/>
    <property type="gene ID" value="HI_0783"/>
</dbReference>
<dbReference type="KEGG" id="hin:HI_0783"/>
<dbReference type="PATRIC" id="fig|71421.8.peg.822"/>
<dbReference type="eggNOG" id="COG0092">
    <property type="taxonomic scope" value="Bacteria"/>
</dbReference>
<dbReference type="HOGENOM" id="CLU_058591_0_2_6"/>
<dbReference type="OrthoDB" id="9806396at2"/>
<dbReference type="PhylomeDB" id="P44372"/>
<dbReference type="BioCyc" id="HINF71421:G1GJ1-823-MONOMER"/>
<dbReference type="Proteomes" id="UP000000579">
    <property type="component" value="Chromosome"/>
</dbReference>
<dbReference type="GO" id="GO:0022627">
    <property type="term" value="C:cytosolic small ribosomal subunit"/>
    <property type="evidence" value="ECO:0000318"/>
    <property type="project" value="GO_Central"/>
</dbReference>
<dbReference type="GO" id="GO:0003729">
    <property type="term" value="F:mRNA binding"/>
    <property type="evidence" value="ECO:0007669"/>
    <property type="project" value="UniProtKB-UniRule"/>
</dbReference>
<dbReference type="GO" id="GO:0019843">
    <property type="term" value="F:rRNA binding"/>
    <property type="evidence" value="ECO:0007669"/>
    <property type="project" value="UniProtKB-UniRule"/>
</dbReference>
<dbReference type="GO" id="GO:0003735">
    <property type="term" value="F:structural constituent of ribosome"/>
    <property type="evidence" value="ECO:0000318"/>
    <property type="project" value="GO_Central"/>
</dbReference>
<dbReference type="GO" id="GO:0006412">
    <property type="term" value="P:translation"/>
    <property type="evidence" value="ECO:0007669"/>
    <property type="project" value="UniProtKB-UniRule"/>
</dbReference>
<dbReference type="CDD" id="cd02412">
    <property type="entry name" value="KH-II_30S_S3"/>
    <property type="match status" value="1"/>
</dbReference>
<dbReference type="FunFam" id="3.30.1140.32:FF:000001">
    <property type="entry name" value="30S ribosomal protein S3"/>
    <property type="match status" value="1"/>
</dbReference>
<dbReference type="FunFam" id="3.30.300.20:FF:000001">
    <property type="entry name" value="30S ribosomal protein S3"/>
    <property type="match status" value="1"/>
</dbReference>
<dbReference type="Gene3D" id="3.30.300.20">
    <property type="match status" value="1"/>
</dbReference>
<dbReference type="Gene3D" id="3.30.1140.32">
    <property type="entry name" value="Ribosomal protein S3, C-terminal domain"/>
    <property type="match status" value="1"/>
</dbReference>
<dbReference type="HAMAP" id="MF_01309_B">
    <property type="entry name" value="Ribosomal_uS3_B"/>
    <property type="match status" value="1"/>
</dbReference>
<dbReference type="InterPro" id="IPR004087">
    <property type="entry name" value="KH_dom"/>
</dbReference>
<dbReference type="InterPro" id="IPR015946">
    <property type="entry name" value="KH_dom-like_a/b"/>
</dbReference>
<dbReference type="InterPro" id="IPR004044">
    <property type="entry name" value="KH_dom_type_2"/>
</dbReference>
<dbReference type="InterPro" id="IPR009019">
    <property type="entry name" value="KH_sf_prok-type"/>
</dbReference>
<dbReference type="InterPro" id="IPR036419">
    <property type="entry name" value="Ribosomal_S3_C_sf"/>
</dbReference>
<dbReference type="InterPro" id="IPR005704">
    <property type="entry name" value="Ribosomal_uS3_bac-typ"/>
</dbReference>
<dbReference type="InterPro" id="IPR001351">
    <property type="entry name" value="Ribosomal_uS3_C"/>
</dbReference>
<dbReference type="InterPro" id="IPR018280">
    <property type="entry name" value="Ribosomal_uS3_CS"/>
</dbReference>
<dbReference type="NCBIfam" id="TIGR01009">
    <property type="entry name" value="rpsC_bact"/>
    <property type="match status" value="1"/>
</dbReference>
<dbReference type="PANTHER" id="PTHR11760">
    <property type="entry name" value="30S/40S RIBOSOMAL PROTEIN S3"/>
    <property type="match status" value="1"/>
</dbReference>
<dbReference type="PANTHER" id="PTHR11760:SF19">
    <property type="entry name" value="SMALL RIBOSOMAL SUBUNIT PROTEIN US3C"/>
    <property type="match status" value="1"/>
</dbReference>
<dbReference type="Pfam" id="PF07650">
    <property type="entry name" value="KH_2"/>
    <property type="match status" value="1"/>
</dbReference>
<dbReference type="Pfam" id="PF00189">
    <property type="entry name" value="Ribosomal_S3_C"/>
    <property type="match status" value="1"/>
</dbReference>
<dbReference type="SMART" id="SM00322">
    <property type="entry name" value="KH"/>
    <property type="match status" value="1"/>
</dbReference>
<dbReference type="SUPFAM" id="SSF54814">
    <property type="entry name" value="Prokaryotic type KH domain (KH-domain type II)"/>
    <property type="match status" value="1"/>
</dbReference>
<dbReference type="SUPFAM" id="SSF54821">
    <property type="entry name" value="Ribosomal protein S3 C-terminal domain"/>
    <property type="match status" value="1"/>
</dbReference>
<dbReference type="PROSITE" id="PS50823">
    <property type="entry name" value="KH_TYPE_2"/>
    <property type="match status" value="1"/>
</dbReference>
<dbReference type="PROSITE" id="PS00548">
    <property type="entry name" value="RIBOSOMAL_S3"/>
    <property type="match status" value="1"/>
</dbReference>